<organism>
    <name type="scientific">Zymomonas mobilis subsp. mobilis (strain ATCC 31821 / ZM4 / CP4)</name>
    <dbReference type="NCBI Taxonomy" id="264203"/>
    <lineage>
        <taxon>Bacteria</taxon>
        <taxon>Pseudomonadati</taxon>
        <taxon>Pseudomonadota</taxon>
        <taxon>Alphaproteobacteria</taxon>
        <taxon>Sphingomonadales</taxon>
        <taxon>Zymomonadaceae</taxon>
        <taxon>Zymomonas</taxon>
    </lineage>
</organism>
<feature type="chain" id="PRO_0000114312" description="Chromosomal replication initiator protein DnaA">
    <location>
        <begin position="1"/>
        <end position="484"/>
    </location>
</feature>
<feature type="region of interest" description="Domain I, interacts with DnaA modulators" evidence="1">
    <location>
        <begin position="1"/>
        <end position="83"/>
    </location>
</feature>
<feature type="region of interest" description="Domain II" evidence="1">
    <location>
        <begin position="83"/>
        <end position="146"/>
    </location>
</feature>
<feature type="region of interest" description="Disordered" evidence="2">
    <location>
        <begin position="110"/>
        <end position="146"/>
    </location>
</feature>
<feature type="region of interest" description="Domain III, AAA+ region" evidence="1">
    <location>
        <begin position="147"/>
        <end position="364"/>
    </location>
</feature>
<feature type="region of interest" description="Domain IV, binds dsDNA" evidence="1">
    <location>
        <begin position="365"/>
        <end position="484"/>
    </location>
</feature>
<feature type="compositionally biased region" description="Basic residues" evidence="2">
    <location>
        <begin position="116"/>
        <end position="125"/>
    </location>
</feature>
<feature type="compositionally biased region" description="Basic and acidic residues" evidence="2">
    <location>
        <begin position="135"/>
        <end position="146"/>
    </location>
</feature>
<feature type="binding site" evidence="1">
    <location>
        <position position="191"/>
    </location>
    <ligand>
        <name>ATP</name>
        <dbReference type="ChEBI" id="CHEBI:30616"/>
    </ligand>
</feature>
<feature type="binding site" evidence="1">
    <location>
        <position position="193"/>
    </location>
    <ligand>
        <name>ATP</name>
        <dbReference type="ChEBI" id="CHEBI:30616"/>
    </ligand>
</feature>
<feature type="binding site" evidence="1">
    <location>
        <position position="194"/>
    </location>
    <ligand>
        <name>ATP</name>
        <dbReference type="ChEBI" id="CHEBI:30616"/>
    </ligand>
</feature>
<feature type="binding site" evidence="1">
    <location>
        <position position="195"/>
    </location>
    <ligand>
        <name>ATP</name>
        <dbReference type="ChEBI" id="CHEBI:30616"/>
    </ligand>
</feature>
<feature type="sequence conflict" description="In Ref. 1; AAD42393." evidence="3" ref="1">
    <original>R</original>
    <variation>P</variation>
    <location>
        <position position="390"/>
    </location>
</feature>
<name>DNAA_ZYMMO</name>
<keyword id="KW-0067">ATP-binding</keyword>
<keyword id="KW-0963">Cytoplasm</keyword>
<keyword id="KW-0235">DNA replication</keyword>
<keyword id="KW-0238">DNA-binding</keyword>
<keyword id="KW-0446">Lipid-binding</keyword>
<keyword id="KW-0547">Nucleotide-binding</keyword>
<keyword id="KW-1185">Reference proteome</keyword>
<dbReference type="EMBL" id="AF157493">
    <property type="protein sequence ID" value="AAD42393.1"/>
    <property type="molecule type" value="Genomic_DNA"/>
</dbReference>
<dbReference type="EMBL" id="AF124349">
    <property type="protein sequence ID" value="AAD19709.1"/>
    <property type="molecule type" value="Genomic_DNA"/>
</dbReference>
<dbReference type="EMBL" id="AE008692">
    <property type="protein sequence ID" value="AAV89980.1"/>
    <property type="molecule type" value="Genomic_DNA"/>
</dbReference>
<dbReference type="RefSeq" id="WP_011241150.1">
    <property type="nucleotide sequence ID" value="NZ_CP035711.1"/>
</dbReference>
<dbReference type="SMR" id="Q9S493"/>
<dbReference type="STRING" id="264203.ZMO1356"/>
<dbReference type="GeneID" id="79903548"/>
<dbReference type="KEGG" id="zmo:ZMO1356"/>
<dbReference type="eggNOG" id="COG0593">
    <property type="taxonomic scope" value="Bacteria"/>
</dbReference>
<dbReference type="HOGENOM" id="CLU_026910_3_0_5"/>
<dbReference type="Proteomes" id="UP000001173">
    <property type="component" value="Chromosome"/>
</dbReference>
<dbReference type="GO" id="GO:0005737">
    <property type="term" value="C:cytoplasm"/>
    <property type="evidence" value="ECO:0007669"/>
    <property type="project" value="UniProtKB-SubCell"/>
</dbReference>
<dbReference type="GO" id="GO:0005886">
    <property type="term" value="C:plasma membrane"/>
    <property type="evidence" value="ECO:0007669"/>
    <property type="project" value="TreeGrafter"/>
</dbReference>
<dbReference type="GO" id="GO:0005524">
    <property type="term" value="F:ATP binding"/>
    <property type="evidence" value="ECO:0007669"/>
    <property type="project" value="UniProtKB-UniRule"/>
</dbReference>
<dbReference type="GO" id="GO:0016887">
    <property type="term" value="F:ATP hydrolysis activity"/>
    <property type="evidence" value="ECO:0007669"/>
    <property type="project" value="InterPro"/>
</dbReference>
<dbReference type="GO" id="GO:0003688">
    <property type="term" value="F:DNA replication origin binding"/>
    <property type="evidence" value="ECO:0007669"/>
    <property type="project" value="UniProtKB-UniRule"/>
</dbReference>
<dbReference type="GO" id="GO:0008289">
    <property type="term" value="F:lipid binding"/>
    <property type="evidence" value="ECO:0007669"/>
    <property type="project" value="UniProtKB-KW"/>
</dbReference>
<dbReference type="GO" id="GO:0006270">
    <property type="term" value="P:DNA replication initiation"/>
    <property type="evidence" value="ECO:0007669"/>
    <property type="project" value="UniProtKB-UniRule"/>
</dbReference>
<dbReference type="GO" id="GO:0006275">
    <property type="term" value="P:regulation of DNA replication"/>
    <property type="evidence" value="ECO:0007669"/>
    <property type="project" value="UniProtKB-UniRule"/>
</dbReference>
<dbReference type="CDD" id="cd00009">
    <property type="entry name" value="AAA"/>
    <property type="match status" value="1"/>
</dbReference>
<dbReference type="CDD" id="cd06571">
    <property type="entry name" value="Bac_DnaA_C"/>
    <property type="match status" value="1"/>
</dbReference>
<dbReference type="FunFam" id="3.40.50.300:FF:000668">
    <property type="entry name" value="Chromosomal replication initiator protein DnaA"/>
    <property type="match status" value="1"/>
</dbReference>
<dbReference type="Gene3D" id="1.10.1750.10">
    <property type="match status" value="1"/>
</dbReference>
<dbReference type="Gene3D" id="1.10.8.60">
    <property type="match status" value="1"/>
</dbReference>
<dbReference type="Gene3D" id="3.30.300.180">
    <property type="match status" value="1"/>
</dbReference>
<dbReference type="Gene3D" id="3.40.50.300">
    <property type="entry name" value="P-loop containing nucleotide triphosphate hydrolases"/>
    <property type="match status" value="1"/>
</dbReference>
<dbReference type="HAMAP" id="MF_00377">
    <property type="entry name" value="DnaA_bact"/>
    <property type="match status" value="1"/>
</dbReference>
<dbReference type="InterPro" id="IPR003593">
    <property type="entry name" value="AAA+_ATPase"/>
</dbReference>
<dbReference type="InterPro" id="IPR001957">
    <property type="entry name" value="Chromosome_initiator_DnaA"/>
</dbReference>
<dbReference type="InterPro" id="IPR020591">
    <property type="entry name" value="Chromosome_initiator_DnaA-like"/>
</dbReference>
<dbReference type="InterPro" id="IPR018312">
    <property type="entry name" value="Chromosome_initiator_DnaA_CS"/>
</dbReference>
<dbReference type="InterPro" id="IPR013159">
    <property type="entry name" value="DnaA_C"/>
</dbReference>
<dbReference type="InterPro" id="IPR013317">
    <property type="entry name" value="DnaA_dom"/>
</dbReference>
<dbReference type="InterPro" id="IPR024633">
    <property type="entry name" value="DnaA_N_dom"/>
</dbReference>
<dbReference type="InterPro" id="IPR038454">
    <property type="entry name" value="DnaA_N_sf"/>
</dbReference>
<dbReference type="InterPro" id="IPR027417">
    <property type="entry name" value="P-loop_NTPase"/>
</dbReference>
<dbReference type="InterPro" id="IPR010921">
    <property type="entry name" value="Trp_repressor/repl_initiator"/>
</dbReference>
<dbReference type="NCBIfam" id="TIGR00362">
    <property type="entry name" value="DnaA"/>
    <property type="match status" value="1"/>
</dbReference>
<dbReference type="PANTHER" id="PTHR30050">
    <property type="entry name" value="CHROMOSOMAL REPLICATION INITIATOR PROTEIN DNAA"/>
    <property type="match status" value="1"/>
</dbReference>
<dbReference type="PANTHER" id="PTHR30050:SF2">
    <property type="entry name" value="CHROMOSOMAL REPLICATION INITIATOR PROTEIN DNAA"/>
    <property type="match status" value="1"/>
</dbReference>
<dbReference type="Pfam" id="PF00308">
    <property type="entry name" value="Bac_DnaA"/>
    <property type="match status" value="1"/>
</dbReference>
<dbReference type="Pfam" id="PF08299">
    <property type="entry name" value="Bac_DnaA_C"/>
    <property type="match status" value="1"/>
</dbReference>
<dbReference type="Pfam" id="PF11638">
    <property type="entry name" value="DnaA_N"/>
    <property type="match status" value="1"/>
</dbReference>
<dbReference type="PRINTS" id="PR00051">
    <property type="entry name" value="DNAA"/>
</dbReference>
<dbReference type="SMART" id="SM00382">
    <property type="entry name" value="AAA"/>
    <property type="match status" value="1"/>
</dbReference>
<dbReference type="SMART" id="SM00760">
    <property type="entry name" value="Bac_DnaA_C"/>
    <property type="match status" value="1"/>
</dbReference>
<dbReference type="SUPFAM" id="SSF52540">
    <property type="entry name" value="P-loop containing nucleoside triphosphate hydrolases"/>
    <property type="match status" value="1"/>
</dbReference>
<dbReference type="SUPFAM" id="SSF48295">
    <property type="entry name" value="TrpR-like"/>
    <property type="match status" value="1"/>
</dbReference>
<dbReference type="PROSITE" id="PS01008">
    <property type="entry name" value="DNAA"/>
    <property type="match status" value="1"/>
</dbReference>
<comment type="function">
    <text evidence="1">Plays an essential role in the initiation and regulation of chromosomal replication. ATP-DnaA binds to the origin of replication (oriC) to initiate formation of the DNA replication initiation complex once per cell cycle. Binds the DnaA box (a 9 base pair repeat at the origin) and separates the double-stranded (ds)DNA. Forms a right-handed helical filament on oriC DNA; dsDNA binds to the exterior of the filament while single-stranded (ss)DNA is stabiized in the filament's interior. The ATP-DnaA-oriC complex binds and stabilizes one strand of the AT-rich DNA unwinding element (DUE), permitting loading of DNA polymerase. After initiation quickly degrades to an ADP-DnaA complex that is not apt for DNA replication. Binds acidic phospholipids.</text>
</comment>
<comment type="subunit">
    <text evidence="1">Oligomerizes as a right-handed, spiral filament on DNA at oriC.</text>
</comment>
<comment type="subcellular location">
    <subcellularLocation>
        <location evidence="1">Cytoplasm</location>
    </subcellularLocation>
</comment>
<comment type="domain">
    <text evidence="1">Domain I is involved in oligomerization and binding regulators, domain II is flexibile and of varying length in different bacteria, domain III forms the AAA+ region, while domain IV binds dsDNA.</text>
</comment>
<comment type="similarity">
    <text evidence="1">Belongs to the DnaA family.</text>
</comment>
<evidence type="ECO:0000255" key="1">
    <source>
        <dbReference type="HAMAP-Rule" id="MF_00377"/>
    </source>
</evidence>
<evidence type="ECO:0000256" key="2">
    <source>
        <dbReference type="SAM" id="MobiDB-lite"/>
    </source>
</evidence>
<evidence type="ECO:0000305" key="3"/>
<gene>
    <name evidence="1" type="primary">dnaA</name>
    <name type="ordered locus">ZMO1356</name>
</gene>
<proteinExistence type="inferred from homology"/>
<protein>
    <recommendedName>
        <fullName evidence="1">Chromosomal replication initiator protein DnaA</fullName>
    </recommendedName>
</protein>
<accession>Q9S493</accession>
<accession>Q5NMT0</accession>
<accession>Q9Z5V1</accession>
<sequence>MQPPSQDWASLLPAAWSEARQILRKKCGSRTFESWLKSLMLADFDSQKKIIRLACPSEFMANWISSHLSDELLLAWRTVWPGIAEVKVSVRNPESQPLLLDVTEIELPLGDQPRPLPKKPAKKKQSVPATPKSTSPEKKAEGEDQNQFEERYNFDNFVVGKANDLAYRAACTFAEGGKLDFNPLFLYGGTGLGKTHLMHAVGIEYLKRHPNSTALYMSAEKFMYDFVASMRAKDTHSFKARLRSADLLMIDDVQFIAGKDSTQEEFFHTMNEVITAGRRLVISADRSPQDLERIESRILSRLSWGLVADVNPADFELRLNIILKKLEAMPQVSMPEDIVFFLAKRICTNVRELEGALNRVVAYATLSNRPINMDFVTETLADLLRTTQQRVTVEDIQKRVCDHYHLKLADMSSKRRDRVIARPRQVAMYLSKQLTSRSLPEIGQRFGGRDHTTVIHAIRQIEKLRITDEDVDSDVRLLMRQFEG</sequence>
<reference key="1">
    <citation type="submission" date="1999-06" db="EMBL/GenBank/DDBJ databases">
        <authorList>
            <person name="Um H.W."/>
            <person name="Kang H.S."/>
        </authorList>
    </citation>
    <scope>NUCLEOTIDE SEQUENCE [GENOMIC DNA]</scope>
    <source>
        <strain>ATCC 31821 / ZM4 / CP4</strain>
    </source>
</reference>
<reference key="2">
    <citation type="journal article" date="2005" name="Nat. Biotechnol.">
        <title>The genome sequence of the ethanologenic bacterium Zymomonas mobilis ZM4.</title>
        <authorList>
            <person name="Seo J.-S."/>
            <person name="Chong H."/>
            <person name="Park H.S."/>
            <person name="Yoon K.-O."/>
            <person name="Jung C."/>
            <person name="Kim J.J."/>
            <person name="Hong J.H."/>
            <person name="Kim H."/>
            <person name="Kim J.-H."/>
            <person name="Kil J.-I."/>
            <person name="Park C.J."/>
            <person name="Oh H.-M."/>
            <person name="Lee J.-S."/>
            <person name="Jin S.-J."/>
            <person name="Um H.-W."/>
            <person name="Lee H.-J."/>
            <person name="Oh S.-J."/>
            <person name="Kim J.Y."/>
            <person name="Kang H.L."/>
            <person name="Lee S.Y."/>
            <person name="Lee K.J."/>
            <person name="Kang H.S."/>
        </authorList>
    </citation>
    <scope>NUCLEOTIDE SEQUENCE [LARGE SCALE GENOMIC DNA]</scope>
    <source>
        <strain>ATCC 31821 / ZM4 / CP4</strain>
    </source>
</reference>